<feature type="initiator methionine" description="Removed" evidence="7">
    <location>
        <position position="1"/>
    </location>
</feature>
<feature type="chain" id="PRO_0000158995" description="Myelin basic protein">
    <location>
        <begin position="2"/>
        <end position="195"/>
    </location>
</feature>
<feature type="region of interest" description="Disordered" evidence="6">
    <location>
        <begin position="45"/>
        <end position="79"/>
    </location>
</feature>
<feature type="region of interest" description="Disordered" evidence="6">
    <location>
        <begin position="117"/>
        <end position="139"/>
    </location>
</feature>
<feature type="site" description="Cleavage; by CTSG" evidence="2">
    <location>
        <begin position="114"/>
        <end position="115"/>
    </location>
</feature>
<feature type="site" description="Cleavage; by CTSG" evidence="2">
    <location>
        <begin position="138"/>
        <end position="139"/>
    </location>
</feature>
<feature type="modified residue" description="N-acetylalanine" evidence="7">
    <location>
        <position position="2"/>
    </location>
</feature>
<feature type="modified residue" description="Phosphoserine" evidence="3">
    <location>
        <position position="8"/>
    </location>
</feature>
<feature type="modified residue" description="Phosphoserine" evidence="4">
    <location>
        <position position="13"/>
    </location>
</feature>
<feature type="modified residue" description="Phosphotyrosine" evidence="15">
    <location>
        <position position="15"/>
    </location>
</feature>
<feature type="modified residue" description="Phosphothreonine" evidence="15">
    <location>
        <position position="18"/>
    </location>
</feature>
<feature type="modified residue" description="Phosphoserine" evidence="15">
    <location>
        <position position="20"/>
    </location>
</feature>
<feature type="modified residue" description="Phosphothreonine" evidence="15">
    <location>
        <position position="21"/>
    </location>
</feature>
<feature type="modified residue" description="Citrulline" evidence="1">
    <location>
        <position position="26"/>
    </location>
</feature>
<feature type="modified residue" description="Citrulline" evidence="1">
    <location>
        <position position="32"/>
    </location>
</feature>
<feature type="modified residue" description="Phosphothreonine" evidence="15">
    <location>
        <position position="36"/>
    </location>
</feature>
<feature type="modified residue" description="Phosphoserine" evidence="15">
    <location>
        <position position="41"/>
    </location>
</feature>
<feature type="modified residue" description="Omega-N-methylarginine" evidence="4">
    <location>
        <position position="44"/>
    </location>
</feature>
<feature type="modified residue" description="Omega-N-methylarginine" evidence="4">
    <location>
        <position position="50"/>
    </location>
</feature>
<feature type="modified residue" description="Phosphoserine" evidence="3">
    <location>
        <position position="57"/>
    </location>
</feature>
<feature type="modified residue" description="Phosphothreonine" evidence="4">
    <location>
        <position position="92"/>
    </location>
</feature>
<feature type="modified residue" description="Phosphotyrosine" evidence="4">
    <location>
        <position position="94"/>
    </location>
</feature>
<feature type="modified residue" description="Phosphoserine" evidence="4">
    <location>
        <position position="101"/>
    </location>
</feature>
<feature type="modified residue" description="Phosphothreonine" evidence="4">
    <location>
        <position position="104"/>
    </location>
</feature>
<feature type="modified residue" description="Phosphothreonine" evidence="8">
    <location>
        <position position="119"/>
    </location>
</feature>
<feature type="modified residue" description="Phosphothreonine" evidence="3">
    <location>
        <position position="122"/>
    </location>
</feature>
<feature type="modified residue" description="Deamidated glutamine" evidence="1">
    <location>
        <position position="127"/>
    </location>
</feature>
<feature type="modified residue" description="Omega-N-methylarginine; alternate" evidence="7">
    <location>
        <position position="131"/>
    </location>
</feature>
<feature type="modified residue" description="Symmetric dimethylarginine; alternate" evidence="7">
    <location>
        <position position="131"/>
    </location>
</feature>
<feature type="modified residue" description="Phosphoserine" evidence="5">
    <location>
        <position position="139"/>
    </location>
</feature>
<feature type="modified residue" description="N6-acetyllysine" evidence="3">
    <location>
        <position position="146"/>
    </location>
</feature>
<feature type="modified residue" description="Citrulline" evidence="1">
    <location>
        <position position="154"/>
    </location>
</feature>
<feature type="modified residue" description="Deamidated glutamine" evidence="1">
    <location>
        <position position="172"/>
    </location>
</feature>
<feature type="modified residue" description="Citrulline" evidence="1">
    <location>
        <position position="184"/>
    </location>
</feature>
<feature type="modified residue" description="Phosphoserine" evidence="3">
    <location>
        <position position="186"/>
    </location>
</feature>
<feature type="modified residue" description="Phosphoserine; by UHMK1" evidence="3">
    <location>
        <position position="190"/>
    </location>
</feature>
<feature type="modified residue" description="Citrulline" evidence="1">
    <location>
        <position position="195"/>
    </location>
</feature>
<feature type="splice variant" id="VSP_003321" description="In isoform 2, isoform 4 and isoform 5." evidence="9 10 11 12 13">
    <location>
        <begin position="60"/>
        <end position="85"/>
    </location>
</feature>
<feature type="splice variant" id="VSP_025711" description="In isoform 5." evidence="9">
    <location>
        <begin position="130"/>
        <end position="140"/>
    </location>
</feature>
<feature type="splice variant" id="VSP_003322" description="In isoform 3 and isoform 4." evidence="10 11 12 13">
    <location>
        <begin position="141"/>
        <end position="181"/>
    </location>
</feature>
<feature type="sequence conflict" description="In Ref. 8; AA sequence." evidence="14" ref="8">
    <original>SG</original>
    <variation>GS</variation>
    <location>
        <begin position="47"/>
        <end position="48"/>
    </location>
</feature>
<feature type="sequence conflict" description="In Ref. 1; CAA10804/CAA10805/CAA10806/CAA10807 and 3." evidence="14" ref="1 3">
    <original>M</original>
    <variation>I</variation>
    <location>
        <position position="192"/>
    </location>
</feature>
<proteinExistence type="evidence at protein level"/>
<gene>
    <name type="primary">Mbp</name>
</gene>
<protein>
    <recommendedName>
        <fullName>Myelin basic protein</fullName>
        <shortName>MBP</shortName>
    </recommendedName>
</protein>
<evidence type="ECO:0000250" key="1"/>
<evidence type="ECO:0000250" key="2">
    <source>
        <dbReference type="UniProtKB" id="P02686"/>
    </source>
</evidence>
<evidence type="ECO:0000250" key="3">
    <source>
        <dbReference type="UniProtKB" id="P02687"/>
    </source>
</evidence>
<evidence type="ECO:0000250" key="4">
    <source>
        <dbReference type="UniProtKB" id="P04370"/>
    </source>
</evidence>
<evidence type="ECO:0000250" key="5">
    <source>
        <dbReference type="UniProtKB" id="P25274"/>
    </source>
</evidence>
<evidence type="ECO:0000256" key="6">
    <source>
        <dbReference type="SAM" id="MobiDB-lite"/>
    </source>
</evidence>
<evidence type="ECO:0000269" key="7">
    <source>
    </source>
</evidence>
<evidence type="ECO:0000269" key="8">
    <source ref="10"/>
</evidence>
<evidence type="ECO:0000303" key="9">
    <source>
    </source>
</evidence>
<evidence type="ECO:0000303" key="10">
    <source>
    </source>
</evidence>
<evidence type="ECO:0000303" key="11">
    <source>
    </source>
</evidence>
<evidence type="ECO:0000303" key="12">
    <source>
    </source>
</evidence>
<evidence type="ECO:0000303" key="13">
    <source ref="1"/>
</evidence>
<evidence type="ECO:0000305" key="14"/>
<evidence type="ECO:0007744" key="15">
    <source>
    </source>
</evidence>
<dbReference type="EMBL" id="AJ132895">
    <property type="protein sequence ID" value="CAA10804.1"/>
    <property type="molecule type" value="mRNA"/>
</dbReference>
<dbReference type="EMBL" id="AJ132896">
    <property type="protein sequence ID" value="CAA10805.1"/>
    <property type="molecule type" value="mRNA"/>
</dbReference>
<dbReference type="EMBL" id="AJ132897">
    <property type="protein sequence ID" value="CAA10806.1"/>
    <property type="molecule type" value="mRNA"/>
</dbReference>
<dbReference type="EMBL" id="AJ132898">
    <property type="protein sequence ID" value="CAA10807.1"/>
    <property type="molecule type" value="mRNA"/>
</dbReference>
<dbReference type="EMBL" id="M25889">
    <property type="protein sequence ID" value="AAA41575.1"/>
    <property type="molecule type" value="mRNA"/>
</dbReference>
<dbReference type="EMBL" id="K00512">
    <property type="status" value="NOT_ANNOTATED_CDS"/>
    <property type="molecule type" value="mRNA"/>
</dbReference>
<dbReference type="EMBL" id="AF439750">
    <property type="protein sequence ID" value="AAL84189.1"/>
    <property type="molecule type" value="mRNA"/>
</dbReference>
<dbReference type="EMBL" id="BC094522">
    <property type="protein sequence ID" value="AAH94522.1"/>
    <property type="molecule type" value="mRNA"/>
</dbReference>
<dbReference type="EMBL" id="X72392">
    <property type="status" value="NOT_ANNOTATED_CDS"/>
    <property type="molecule type" value="mRNA"/>
</dbReference>
<dbReference type="PIR" id="B24351">
    <property type="entry name" value="MBRTS"/>
</dbReference>
<dbReference type="RefSeq" id="NP_001020462.1">
    <molecule id="P02688-1"/>
    <property type="nucleotide sequence ID" value="NM_001025291.1"/>
</dbReference>
<dbReference type="RefSeq" id="NP_001020463.1">
    <molecule id="P02688-2"/>
    <property type="nucleotide sequence ID" value="NM_001025292.1"/>
</dbReference>
<dbReference type="RefSeq" id="NP_001020464.1">
    <molecule id="P02688-3"/>
    <property type="nucleotide sequence ID" value="NM_001025293.1"/>
</dbReference>
<dbReference type="RefSeq" id="NP_001020465.1">
    <molecule id="P02688-5"/>
    <property type="nucleotide sequence ID" value="NM_001025294.1"/>
</dbReference>
<dbReference type="RefSeq" id="NP_058722.1">
    <molecule id="P02688-4"/>
    <property type="nucleotide sequence ID" value="NM_017026.2"/>
</dbReference>
<dbReference type="BMRB" id="P02688"/>
<dbReference type="SMR" id="P02688"/>
<dbReference type="BioGRID" id="246698">
    <property type="interactions" value="8"/>
</dbReference>
<dbReference type="FunCoup" id="P02688">
    <property type="interactions" value="120"/>
</dbReference>
<dbReference type="IntAct" id="P02688">
    <property type="interactions" value="3"/>
</dbReference>
<dbReference type="MINT" id="P02688"/>
<dbReference type="STRING" id="10116.ENSRNOP00000070157"/>
<dbReference type="CarbonylDB" id="P02688"/>
<dbReference type="iPTMnet" id="P02688"/>
<dbReference type="PhosphoSitePlus" id="P02688"/>
<dbReference type="SwissPalm" id="P02688"/>
<dbReference type="PaxDb" id="10116-ENSRNOP00000022303"/>
<dbReference type="DNASU" id="24547"/>
<dbReference type="GeneID" id="24547"/>
<dbReference type="KEGG" id="rno:24547"/>
<dbReference type="AGR" id="RGD:3054"/>
<dbReference type="CTD" id="4155"/>
<dbReference type="RGD" id="3054">
    <property type="gene designation" value="Mbp"/>
</dbReference>
<dbReference type="VEuPathDB" id="HostDB:ENSRNOG00000016516"/>
<dbReference type="eggNOG" id="ENOG502S4SJ">
    <property type="taxonomic scope" value="Eukaryota"/>
</dbReference>
<dbReference type="HOGENOM" id="CLU_102586_0_0_1"/>
<dbReference type="InParanoid" id="P02688"/>
<dbReference type="OrthoDB" id="8862162at2759"/>
<dbReference type="PRO" id="PR:P02688"/>
<dbReference type="Proteomes" id="UP000002494">
    <property type="component" value="Chromosome 18"/>
</dbReference>
<dbReference type="Bgee" id="ENSRNOG00000016516">
    <property type="expression patterns" value="Expressed in cerebellum and 20 other cell types or tissues"/>
</dbReference>
<dbReference type="ExpressionAtlas" id="P02688">
    <property type="expression patterns" value="baseline and differential"/>
</dbReference>
<dbReference type="GO" id="GO:0071944">
    <property type="term" value="C:cell periphery"/>
    <property type="evidence" value="ECO:0000266"/>
    <property type="project" value="RGD"/>
</dbReference>
<dbReference type="GO" id="GO:0042995">
    <property type="term" value="C:cell projection"/>
    <property type="evidence" value="ECO:0000266"/>
    <property type="project" value="RGD"/>
</dbReference>
<dbReference type="GO" id="GO:0009986">
    <property type="term" value="C:cell surface"/>
    <property type="evidence" value="ECO:0000314"/>
    <property type="project" value="ARUK-UCL"/>
</dbReference>
<dbReference type="GO" id="GO:0043218">
    <property type="term" value="C:compact myelin"/>
    <property type="evidence" value="ECO:0000314"/>
    <property type="project" value="RGD"/>
</dbReference>
<dbReference type="GO" id="GO:0033269">
    <property type="term" value="C:internode region of axon"/>
    <property type="evidence" value="ECO:0000266"/>
    <property type="project" value="RGD"/>
</dbReference>
<dbReference type="GO" id="GO:0043209">
    <property type="term" value="C:myelin sheath"/>
    <property type="evidence" value="ECO:0000314"/>
    <property type="project" value="UniProtKB"/>
</dbReference>
<dbReference type="GO" id="GO:0043025">
    <property type="term" value="C:neuronal cell body"/>
    <property type="evidence" value="ECO:0000266"/>
    <property type="project" value="RGD"/>
</dbReference>
<dbReference type="GO" id="GO:0005886">
    <property type="term" value="C:plasma membrane"/>
    <property type="evidence" value="ECO:0007669"/>
    <property type="project" value="UniProtKB-KW"/>
</dbReference>
<dbReference type="GO" id="GO:0032991">
    <property type="term" value="C:protein-containing complex"/>
    <property type="evidence" value="ECO:0000266"/>
    <property type="project" value="RGD"/>
</dbReference>
<dbReference type="GO" id="GO:0005516">
    <property type="term" value="F:calmodulin binding"/>
    <property type="evidence" value="ECO:0000266"/>
    <property type="project" value="RGD"/>
</dbReference>
<dbReference type="GO" id="GO:0002020">
    <property type="term" value="F:protease binding"/>
    <property type="evidence" value="ECO:0000266"/>
    <property type="project" value="RGD"/>
</dbReference>
<dbReference type="GO" id="GO:0019911">
    <property type="term" value="F:structural constituent of myelin sheath"/>
    <property type="evidence" value="ECO:0000315"/>
    <property type="project" value="RGD"/>
</dbReference>
<dbReference type="GO" id="GO:0035633">
    <property type="term" value="P:maintenance of blood-brain barrier"/>
    <property type="evidence" value="ECO:0000266"/>
    <property type="project" value="RGD"/>
</dbReference>
<dbReference type="GO" id="GO:0000165">
    <property type="term" value="P:MAPK cascade"/>
    <property type="evidence" value="ECO:0000266"/>
    <property type="project" value="RGD"/>
</dbReference>
<dbReference type="GO" id="GO:0061024">
    <property type="term" value="P:membrane organization"/>
    <property type="evidence" value="ECO:0000266"/>
    <property type="project" value="RGD"/>
</dbReference>
<dbReference type="GO" id="GO:0042552">
    <property type="term" value="P:myelination"/>
    <property type="evidence" value="ECO:0000315"/>
    <property type="project" value="RGD"/>
</dbReference>
<dbReference type="GO" id="GO:0050771">
    <property type="term" value="P:negative regulation of axonogenesis"/>
    <property type="evidence" value="ECO:0000315"/>
    <property type="project" value="RGD"/>
</dbReference>
<dbReference type="GO" id="GO:0034115">
    <property type="term" value="P:negative regulation of heterotypic cell-cell adhesion"/>
    <property type="evidence" value="ECO:0000266"/>
    <property type="project" value="RGD"/>
</dbReference>
<dbReference type="GO" id="GO:2000343">
    <property type="term" value="P:positive regulation of chemokine (C-X-C motif) ligand 2 production"/>
    <property type="evidence" value="ECO:0000266"/>
    <property type="project" value="RGD"/>
</dbReference>
<dbReference type="GO" id="GO:0032755">
    <property type="term" value="P:positive regulation of interleukin-6 production"/>
    <property type="evidence" value="ECO:0000266"/>
    <property type="project" value="RGD"/>
</dbReference>
<dbReference type="GO" id="GO:0070542">
    <property type="term" value="P:response to fatty acid"/>
    <property type="evidence" value="ECO:0000270"/>
    <property type="project" value="RGD"/>
</dbReference>
<dbReference type="GO" id="GO:0046689">
    <property type="term" value="P:response to mercury ion"/>
    <property type="evidence" value="ECO:0000270"/>
    <property type="project" value="RGD"/>
</dbReference>
<dbReference type="GO" id="GO:0032570">
    <property type="term" value="P:response to progesterone"/>
    <property type="evidence" value="ECO:0000314"/>
    <property type="project" value="RGD"/>
</dbReference>
<dbReference type="GO" id="GO:0009636">
    <property type="term" value="P:response to toxic substance"/>
    <property type="evidence" value="ECO:0000266"/>
    <property type="project" value="RGD"/>
</dbReference>
<dbReference type="GO" id="GO:0034612">
    <property type="term" value="P:response to tumor necrosis factor"/>
    <property type="evidence" value="ECO:0000270"/>
    <property type="project" value="RGD"/>
</dbReference>
<dbReference type="GO" id="GO:0007605">
    <property type="term" value="P:sensory perception of sound"/>
    <property type="evidence" value="ECO:0000266"/>
    <property type="project" value="RGD"/>
</dbReference>
<dbReference type="InterPro" id="IPR000548">
    <property type="entry name" value="Myelin_BP"/>
</dbReference>
<dbReference type="PANTHER" id="PTHR11429">
    <property type="entry name" value="MYELIN BASIC PROTEIN"/>
    <property type="match status" value="1"/>
</dbReference>
<dbReference type="PANTHER" id="PTHR11429:SF0">
    <property type="entry name" value="MYELIN BASIC PROTEIN"/>
    <property type="match status" value="1"/>
</dbReference>
<dbReference type="Pfam" id="PF01669">
    <property type="entry name" value="Myelin_MBP"/>
    <property type="match status" value="1"/>
</dbReference>
<dbReference type="PRINTS" id="PR00212">
    <property type="entry name" value="MYELINMBP"/>
</dbReference>
<dbReference type="PROSITE" id="PS00569">
    <property type="entry name" value="MYELIN_MBP"/>
    <property type="match status" value="1"/>
</dbReference>
<keyword id="KW-0007">Acetylation</keyword>
<keyword id="KW-0025">Alternative splicing</keyword>
<keyword id="KW-0069">Autoimmune encephalomyelitis</keyword>
<keyword id="KW-1003">Cell membrane</keyword>
<keyword id="KW-0164">Citrullination</keyword>
<keyword id="KW-0903">Direct protein sequencing</keyword>
<keyword id="KW-0472">Membrane</keyword>
<keyword id="KW-0488">Methylation</keyword>
<keyword id="KW-0597">Phosphoprotein</keyword>
<keyword id="KW-1185">Reference proteome</keyword>
<reference key="1">
    <citation type="submission" date="1999-02" db="EMBL/GenBank/DDBJ databases">
        <authorList>
            <person name="Lobell A.M."/>
            <person name="Wigzell H."/>
        </authorList>
    </citation>
    <scope>NUCLEOTIDE SEQUENCE [MRNA] (ISOFORMS 1; 2; 3 AND 4)</scope>
</reference>
<reference key="2">
    <citation type="journal article" date="1986" name="Biol. Chem. Hoppe-Seyler">
        <title>Cloned proteolipid protein and myelin basic protein cDNA. Transcription of the two genes during myelination.</title>
        <authorList>
            <person name="Schaich M."/>
            <person name="Budzinski R.M."/>
            <person name="Stoffel W."/>
        </authorList>
    </citation>
    <scope>NUCLEOTIDE SEQUENCE [MRNA] (ISOFORM 4)</scope>
</reference>
<reference key="3">
    <citation type="journal article" date="1983" name="Cell">
        <title>Characterization of cloned cDNA representing rat myelin basic protein: absence of expression in brain of shiverer mutant mice.</title>
        <authorList>
            <person name="Roach A."/>
            <person name="Boylan K.B."/>
            <person name="Horvath S."/>
            <person name="Prusiner S.B."/>
            <person name="Hood L.E."/>
        </authorList>
    </citation>
    <scope>NUCLEOTIDE SEQUENCE [MRNA] (ISOFORM 4)</scope>
</reference>
<reference key="4">
    <citation type="journal article" date="2003" name="Biochim. Biophys. Acta">
        <title>Identification and characterisation of a cDNA encoding a 17-kDa isoform of rat myelin basic protein.</title>
        <authorList>
            <person name="Matheus L."/>
            <person name="Blair G.E."/>
        </authorList>
    </citation>
    <scope>NUCLEOTIDE SEQUENCE [MRNA] (ISOFORM 5)</scope>
    <source>
        <strain>Sprague-Dawley</strain>
    </source>
</reference>
<reference key="5">
    <citation type="journal article" date="2004" name="Genome Res.">
        <title>The status, quality, and expansion of the NIH full-length cDNA project: the Mammalian Gene Collection (MGC).</title>
        <authorList>
            <consortium name="The MGC Project Team"/>
        </authorList>
    </citation>
    <scope>NUCLEOTIDE SEQUENCE [LARGE SCALE MRNA] (ISOFORM 4)</scope>
    <source>
        <tissue>Brain</tissue>
    </source>
</reference>
<reference key="6">
    <citation type="journal article" date="1974" name="Biochem. J.">
        <title>Amino acid sequence of the smaller basic protein from rat brain myelin.</title>
        <authorList>
            <person name="Dunkley P.R."/>
            <person name="Carnegie P.R."/>
        </authorList>
    </citation>
    <scope>PROTEIN SEQUENCE OF 2-195 (ISOFORM 4)</scope>
    <scope>CLEAVAGE OF INITIATOR METHIONINE</scope>
    <scope>ACETYLATION AT ALA-2</scope>
    <scope>METHYLATION AT ARG-131</scope>
    <source>
        <tissue>Brain</tissue>
    </source>
</reference>
<reference key="7">
    <citation type="submission" date="2007-07" db="UniProtKB">
        <authorList>
            <person name="Lubec G."/>
            <person name="Afjehi-Sadat L."/>
            <person name="Chen W.-Q."/>
            <person name="Kang S.U."/>
        </authorList>
    </citation>
    <scope>PROTEIN SEQUENCE OF 11-44; 68-75; 91-129; 138-154 AND 167-177</scope>
    <scope>IDENTIFICATION BY MASS SPECTROMETRY</scope>
    <source>
        <strain>Sprague-Dawley</strain>
        <tissue>Hippocampus</tissue>
        <tissue>Spinal cord</tissue>
    </source>
</reference>
<reference key="8">
    <citation type="journal article" date="1973" name="Science">
        <title>Experimental allergic encephalomyelitis in the rat: response to encephalitogenic proteins and peptides.</title>
        <authorList>
            <person name="McFarlin D.E."/>
            <person name="Blank S.E."/>
            <person name="Kibler R.F."/>
            <person name="McKneally S.S."/>
            <person name="Shapira R."/>
        </authorList>
    </citation>
    <scope>PROTEIN SEQUENCE OF 46-112 (ISOFORM 4)</scope>
</reference>
<reference key="9">
    <citation type="journal article" date="1995" name="Autoimmunity">
        <title>Alternative splicing and cDNA sequence of myelin basic protein gene of the Lewis rat.</title>
        <authorList>
            <person name="Malotka J."/>
            <person name="Dornmair K."/>
        </authorList>
    </citation>
    <scope>NUCLEOTIDE SEQUENCE [MRNA] OF 131-195</scope>
    <source>
        <strain>Lewis</strain>
        <tissue>Brain</tissue>
    </source>
</reference>
<reference key="10">
    <citation type="submission" date="2007-02" db="UniProtKB">
        <authorList>
            <person name="Lubec G."/>
            <person name="Chen W.-Q."/>
        </authorList>
    </citation>
    <scope>PHOSPHORYLATION AT THR-119</scope>
    <scope>IDENTIFICATION BY MASS SPECTROMETRY</scope>
</reference>
<reference key="11">
    <citation type="journal article" date="2012" name="Nat. Commun.">
        <title>Quantitative maps of protein phosphorylation sites across 14 different rat organs and tissues.</title>
        <authorList>
            <person name="Lundby A."/>
            <person name="Secher A."/>
            <person name="Lage K."/>
            <person name="Nordsborg N.B."/>
            <person name="Dmytriyev A."/>
            <person name="Lundby C."/>
            <person name="Olsen J.V."/>
        </authorList>
    </citation>
    <scope>PHOSPHORYLATION [LARGE SCALE ANALYSIS] AT TYR-15; THR-18; SER-20; THR-21; THR-36 AND SER-41</scope>
    <scope>IDENTIFICATION BY MASS SPECTROMETRY [LARGE SCALE ANALYSIS]</scope>
</reference>
<sequence length="195" mass="21502">MASQKRPSQRHGSKYLATASTMDHARHGFLPRHRDTGILDSIGRFFSGDRGAPKRGSGKVPWLKQSRSPLPSHARSRPGLCHMYKDSHTRTTHYGSLPQKSQRTQDENPVVHFFKNIVTPRTPPPSQGKGRGLSLSRFSWGAEGQKPGFGYGGRASDYKSAHKGFKGAYDAQGTLSKIFKLGGRDSRSGSPMARR</sequence>
<comment type="function">
    <text evidence="1">Is, with PLP, the most abundant protein component of the myelin membrane in the CNS. Has a role in both the formation and stabilization of this compact multilayer arrangement of bilayers. Each splice variant and charge isomer may have a specialized function in the assembly of an optimized, biochemically functional myelin membrane (By similarity).</text>
</comment>
<comment type="subunit">
    <text evidence="1">Homodimer.</text>
</comment>
<comment type="interaction">
    <interactant intactId="EBI-1638296">
        <id>P02688</id>
    </interactant>
    <interactant intactId="EBI-1638146">
        <id>Q62976</id>
        <label>Kcnma1</label>
    </interactant>
    <organismsDiffer>false</organismsDiffer>
    <experiments>4</experiments>
</comment>
<comment type="subcellular location">
    <subcellularLocation>
        <location>Myelin membrane</location>
        <topology>Peripheral membrane protein</topology>
        <orientation>Cytoplasmic side</orientation>
    </subcellularLocation>
    <text>Cytoplasmic side of myelin.</text>
</comment>
<comment type="alternative products">
    <event type="alternative splicing"/>
    <isoform>
        <id>P02688-1</id>
        <name>1</name>
        <name>21.5 kDa</name>
        <sequence type="displayed"/>
    </isoform>
    <isoform>
        <id>P02688-2</id>
        <name>2</name>
        <name>18.5 kDa</name>
        <name>MBP L</name>
        <sequence type="described" ref="VSP_003321"/>
    </isoform>
    <isoform>
        <id>P02688-3</id>
        <name>3</name>
        <name>17 kDa</name>
        <sequence type="described" ref="VSP_003322"/>
    </isoform>
    <isoform>
        <id>P02688-4</id>
        <name>4</name>
        <name>14 kDa</name>
        <name>MBP S</name>
        <name>smaller myelin basic protein</name>
        <sequence type="described" ref="VSP_003321 VSP_003322"/>
    </isoform>
    <isoform>
        <id>P02688-5</id>
        <name>5</name>
        <name>17 kDa</name>
        <sequence type="described" ref="VSP_003321 VSP_025711"/>
    </isoform>
    <text>Additional isoforms seem to exist.</text>
</comment>
<comment type="tissue specificity">
    <text>Found in both the central and the peripheral nervous system.</text>
</comment>
<comment type="PTM">
    <text evidence="7 8">As in other animals, several charge isomers may be produced as a result of optional post-translational modifications, such as phosphorylation of serine or threonine residues, deamidation of glutamine or asparagine residues, citrullination and methylation of arginine residues.</text>
</comment>
<comment type="PTM">
    <text>Arg-131 was found to be 44% monomethylated and 11% symmetrically dimethylated.</text>
</comment>
<comment type="PTM">
    <text evidence="1">Phosphorylated by TAOK2, VRK2, MAPK11, MAPK12, MAPK14 and MINK1.</text>
</comment>
<comment type="PTM">
    <text evidence="2">Proteolytically cleaved in B cell lysosomes by cathepsin CTSG which degrades the major immunogenic MBP epitope and prevents the activation of MBP-specific autoreactive T cells.</text>
</comment>
<comment type="similarity">
    <text evidence="14">Belongs to the myelin basic protein family.</text>
</comment>
<name>MBP_RAT</name>
<accession>P02688</accession>
<accession>Q505J1</accession>
<accession>Q8R4K6</accession>
<accession>Q9Z1J4</accession>
<accession>Q9Z1J5</accession>
<accession>Q9Z1J6</accession>
<organism>
    <name type="scientific">Rattus norvegicus</name>
    <name type="common">Rat</name>
    <dbReference type="NCBI Taxonomy" id="10116"/>
    <lineage>
        <taxon>Eukaryota</taxon>
        <taxon>Metazoa</taxon>
        <taxon>Chordata</taxon>
        <taxon>Craniata</taxon>
        <taxon>Vertebrata</taxon>
        <taxon>Euteleostomi</taxon>
        <taxon>Mammalia</taxon>
        <taxon>Eutheria</taxon>
        <taxon>Euarchontoglires</taxon>
        <taxon>Glires</taxon>
        <taxon>Rodentia</taxon>
        <taxon>Myomorpha</taxon>
        <taxon>Muroidea</taxon>
        <taxon>Muridae</taxon>
        <taxon>Murinae</taxon>
        <taxon>Rattus</taxon>
    </lineage>
</organism>